<protein>
    <recommendedName>
        <fullName evidence="1">Pyridoxal 5'-phosphate synthase subunit PdxS</fullName>
        <shortName evidence="1">PLP synthase subunit PdxS</shortName>
        <ecNumber evidence="1">4.3.3.6</ecNumber>
    </recommendedName>
    <alternativeName>
        <fullName evidence="1">Pdx1</fullName>
    </alternativeName>
</protein>
<sequence length="29" mass="3155">MGYDINXXLAQMXKGGVIMXXXXXXQAVI</sequence>
<evidence type="ECO:0000255" key="1">
    <source>
        <dbReference type="HAMAP-Rule" id="MF_01824"/>
    </source>
</evidence>
<keyword id="KW-0903">Direct protein sequencing</keyword>
<keyword id="KW-0456">Lyase</keyword>
<keyword id="KW-0663">Pyridoxal phosphate</keyword>
<keyword id="KW-0704">Schiff base</keyword>
<proteinExistence type="evidence at protein level"/>
<organism>
    <name type="scientific">Clostridium pasteurianum</name>
    <dbReference type="NCBI Taxonomy" id="1501"/>
    <lineage>
        <taxon>Bacteria</taxon>
        <taxon>Bacillati</taxon>
        <taxon>Bacillota</taxon>
        <taxon>Clostridia</taxon>
        <taxon>Eubacteriales</taxon>
        <taxon>Clostridiaceae</taxon>
        <taxon>Clostridium</taxon>
    </lineage>
</organism>
<gene>
    <name evidence="1" type="primary">pdxS</name>
</gene>
<feature type="chain" id="PRO_0000109387" description="Pyridoxal 5'-phosphate synthase subunit PdxS">
    <location>
        <begin position="1"/>
        <end position="29" status="greater than"/>
    </location>
</feature>
<feature type="sequence variant">
    <original>Q</original>
    <variation>E</variation>
    <location>
        <position position="26"/>
    </location>
</feature>
<feature type="non-terminal residue">
    <location>
        <position position="29"/>
    </location>
</feature>
<comment type="function">
    <text evidence="1">Catalyzes the formation of pyridoxal 5'-phosphate from ribose 5-phosphate (RBP), glyceraldehyde 3-phosphate (G3P) and ammonia. The ammonia is provided by the PdxT subunit. Can also use ribulose 5-phosphate and dihydroxyacetone phosphate as substrates, resulting from enzyme-catalyzed isomerization of RBP and G3P, respectively.</text>
</comment>
<comment type="catalytic activity">
    <reaction evidence="1">
        <text>aldehydo-D-ribose 5-phosphate + D-glyceraldehyde 3-phosphate + L-glutamine = pyridoxal 5'-phosphate + L-glutamate + phosphate + 3 H2O + H(+)</text>
        <dbReference type="Rhea" id="RHEA:31507"/>
        <dbReference type="ChEBI" id="CHEBI:15377"/>
        <dbReference type="ChEBI" id="CHEBI:15378"/>
        <dbReference type="ChEBI" id="CHEBI:29985"/>
        <dbReference type="ChEBI" id="CHEBI:43474"/>
        <dbReference type="ChEBI" id="CHEBI:58273"/>
        <dbReference type="ChEBI" id="CHEBI:58359"/>
        <dbReference type="ChEBI" id="CHEBI:59776"/>
        <dbReference type="ChEBI" id="CHEBI:597326"/>
        <dbReference type="EC" id="4.3.3.6"/>
    </reaction>
</comment>
<comment type="pathway">
    <text evidence="1">Cofactor biosynthesis; pyridoxal 5'-phosphate biosynthesis.</text>
</comment>
<comment type="subunit">
    <text evidence="1">In the presence of PdxT, forms a dodecamer of heterodimers.</text>
</comment>
<comment type="miscellaneous">
    <text>On the 2D-gel the determined pI of this unknown protein is 5.1, its MW is 32.7 kDa.</text>
</comment>
<comment type="similarity">
    <text evidence="1">Belongs to the PdxS/SNZ family.</text>
</comment>
<reference key="1">
    <citation type="journal article" date="1998" name="Electrophoresis">
        <title>Two-dimensional gel electrophoresis separation and N-terminal sequence analysis of proteins from Clostridium pasteurianum W5.</title>
        <authorList>
            <person name="Flengsrud R."/>
            <person name="Skjeldal L."/>
        </authorList>
    </citation>
    <scope>PROTEIN SEQUENCE</scope>
    <source>
        <strain>ATCC 6013 / DSM 525 / NCIB 9486 / VKM B-1774 / W5</strain>
    </source>
</reference>
<dbReference type="EC" id="4.3.3.6" evidence="1"/>
<dbReference type="UniPathway" id="UPA00245"/>
<dbReference type="GO" id="GO:0036381">
    <property type="term" value="F:pyridoxal 5'-phosphate synthase (glutamine hydrolysing) activity"/>
    <property type="evidence" value="ECO:0007669"/>
    <property type="project" value="UniProtKB-EC"/>
</dbReference>
<dbReference type="GO" id="GO:0042823">
    <property type="term" value="P:pyridoxal phosphate biosynthetic process"/>
    <property type="evidence" value="ECO:0007669"/>
    <property type="project" value="UniProtKB-UniPathway"/>
</dbReference>
<dbReference type="InterPro" id="IPR001852">
    <property type="entry name" value="PdxS/SNZ"/>
</dbReference>
<dbReference type="PROSITE" id="PS51129">
    <property type="entry name" value="PDXS_SNZ_2"/>
    <property type="match status" value="1"/>
</dbReference>
<name>PDXS_CLOPA</name>
<accession>P81356</accession>